<keyword id="KW-0028">Amino-acid biosynthesis</keyword>
<keyword id="KW-0368">Histidine biosynthesis</keyword>
<keyword id="KW-0479">Metal-binding</keyword>
<keyword id="KW-0520">NAD</keyword>
<keyword id="KW-0560">Oxidoreductase</keyword>
<keyword id="KW-1185">Reference proteome</keyword>
<keyword id="KW-0862">Zinc</keyword>
<accession>Q8FG52</accession>
<gene>
    <name evidence="2" type="primary">hisD</name>
    <name type="ordered locus">c2547</name>
</gene>
<sequence length="434" mass="46239">MSFNTIIDWNSCTAEQQRQLLMRPAISASESITRTVNDILDNVKTRGDEALREYSAKFDKTTVTALKVSADEIAAASERLSDELKQAMAVAVKNIETFHTAQKLPPVDVETQPGVRCQQVTRPVASVGLYIPGGSAPLFSTVLMLATPARIAGCKKVVLCSPPPIADEILYAAQLCGVQDVFNVGGAQAIAALAFGTESVPKVDKIFGPGNAFVTEAKRQVSQRLDGAAIDMPAGPSEVLVIADSGATPDFVASDLLSQAEHGPDSQVILLTPDADMARRVAEAVERQLAELPRAETARQALNASRLIVTKDLAQCVEISNQYGPEHLIIQTRNARELVDGITSAGSVFLGDWSPESAGDYASGTNHVLPTYGYTATCSSLGLADFQKRMTVQELSKEGFSTLASTIETLAAAERLTAHKNAVTLRVNALKEQA</sequence>
<protein>
    <recommendedName>
        <fullName evidence="2">Histidinol dehydrogenase</fullName>
        <shortName evidence="2">HDH</shortName>
        <ecNumber evidence="2">1.1.1.23</ecNumber>
    </recommendedName>
</protein>
<evidence type="ECO:0000250" key="1"/>
<evidence type="ECO:0000255" key="2">
    <source>
        <dbReference type="HAMAP-Rule" id="MF_01024"/>
    </source>
</evidence>
<evidence type="ECO:0000305" key="3"/>
<proteinExistence type="inferred from homology"/>
<reference key="1">
    <citation type="journal article" date="2002" name="Proc. Natl. Acad. Sci. U.S.A.">
        <title>Extensive mosaic structure revealed by the complete genome sequence of uropathogenic Escherichia coli.</title>
        <authorList>
            <person name="Welch R.A."/>
            <person name="Burland V."/>
            <person name="Plunkett G. III"/>
            <person name="Redford P."/>
            <person name="Roesch P."/>
            <person name="Rasko D."/>
            <person name="Buckles E.L."/>
            <person name="Liou S.-R."/>
            <person name="Boutin A."/>
            <person name="Hackett J."/>
            <person name="Stroud D."/>
            <person name="Mayhew G.F."/>
            <person name="Rose D.J."/>
            <person name="Zhou S."/>
            <person name="Schwartz D.C."/>
            <person name="Perna N.T."/>
            <person name="Mobley H.L.T."/>
            <person name="Donnenberg M.S."/>
            <person name="Blattner F.R."/>
        </authorList>
    </citation>
    <scope>NUCLEOTIDE SEQUENCE [LARGE SCALE GENOMIC DNA]</scope>
    <source>
        <strain>CFT073 / ATCC 700928 / UPEC</strain>
    </source>
</reference>
<feature type="initiator methionine" description="Removed" evidence="1">
    <location>
        <position position="1"/>
    </location>
</feature>
<feature type="chain" id="PRO_0000135772" description="Histidinol dehydrogenase">
    <location>
        <begin position="2"/>
        <end position="434"/>
    </location>
</feature>
<feature type="active site" description="Proton acceptor" evidence="2">
    <location>
        <position position="326"/>
    </location>
</feature>
<feature type="active site" description="Proton acceptor" evidence="2">
    <location>
        <position position="327"/>
    </location>
</feature>
<feature type="binding site" evidence="2">
    <location>
        <position position="130"/>
    </location>
    <ligand>
        <name>NAD(+)</name>
        <dbReference type="ChEBI" id="CHEBI:57540"/>
    </ligand>
</feature>
<feature type="binding site" evidence="2">
    <location>
        <position position="188"/>
    </location>
    <ligand>
        <name>NAD(+)</name>
        <dbReference type="ChEBI" id="CHEBI:57540"/>
    </ligand>
</feature>
<feature type="binding site" evidence="2">
    <location>
        <position position="211"/>
    </location>
    <ligand>
        <name>NAD(+)</name>
        <dbReference type="ChEBI" id="CHEBI:57540"/>
    </ligand>
</feature>
<feature type="binding site" evidence="2">
    <location>
        <position position="237"/>
    </location>
    <ligand>
        <name>substrate</name>
    </ligand>
</feature>
<feature type="binding site" evidence="2">
    <location>
        <position position="259"/>
    </location>
    <ligand>
        <name>substrate</name>
    </ligand>
</feature>
<feature type="binding site" evidence="2">
    <location>
        <position position="259"/>
    </location>
    <ligand>
        <name>Zn(2+)</name>
        <dbReference type="ChEBI" id="CHEBI:29105"/>
    </ligand>
</feature>
<feature type="binding site" evidence="2">
    <location>
        <position position="262"/>
    </location>
    <ligand>
        <name>substrate</name>
    </ligand>
</feature>
<feature type="binding site" evidence="2">
    <location>
        <position position="262"/>
    </location>
    <ligand>
        <name>Zn(2+)</name>
        <dbReference type="ChEBI" id="CHEBI:29105"/>
    </ligand>
</feature>
<feature type="binding site" evidence="2">
    <location>
        <position position="327"/>
    </location>
    <ligand>
        <name>substrate</name>
    </ligand>
</feature>
<feature type="binding site" evidence="2">
    <location>
        <position position="360"/>
    </location>
    <ligand>
        <name>substrate</name>
    </ligand>
</feature>
<feature type="binding site" evidence="2">
    <location>
        <position position="360"/>
    </location>
    <ligand>
        <name>Zn(2+)</name>
        <dbReference type="ChEBI" id="CHEBI:29105"/>
    </ligand>
</feature>
<feature type="binding site" evidence="2">
    <location>
        <position position="414"/>
    </location>
    <ligand>
        <name>substrate</name>
    </ligand>
</feature>
<feature type="binding site" evidence="2">
    <location>
        <position position="419"/>
    </location>
    <ligand>
        <name>substrate</name>
    </ligand>
</feature>
<feature type="binding site" evidence="2">
    <location>
        <position position="419"/>
    </location>
    <ligand>
        <name>Zn(2+)</name>
        <dbReference type="ChEBI" id="CHEBI:29105"/>
    </ligand>
</feature>
<dbReference type="EC" id="1.1.1.23" evidence="2"/>
<dbReference type="EMBL" id="AE014075">
    <property type="protein sequence ID" value="AAN81002.1"/>
    <property type="status" value="ALT_INIT"/>
    <property type="molecule type" value="Genomic_DNA"/>
</dbReference>
<dbReference type="RefSeq" id="WP_001297912.1">
    <property type="nucleotide sequence ID" value="NZ_CP051263.1"/>
</dbReference>
<dbReference type="SMR" id="Q8FG52"/>
<dbReference type="STRING" id="199310.c2547"/>
<dbReference type="KEGG" id="ecc:c2547"/>
<dbReference type="eggNOG" id="COG0141">
    <property type="taxonomic scope" value="Bacteria"/>
</dbReference>
<dbReference type="HOGENOM" id="CLU_006732_3_0_6"/>
<dbReference type="UniPathway" id="UPA00031">
    <property type="reaction ID" value="UER00014"/>
</dbReference>
<dbReference type="Proteomes" id="UP000001410">
    <property type="component" value="Chromosome"/>
</dbReference>
<dbReference type="GO" id="GO:0005829">
    <property type="term" value="C:cytosol"/>
    <property type="evidence" value="ECO:0007669"/>
    <property type="project" value="TreeGrafter"/>
</dbReference>
<dbReference type="GO" id="GO:0004399">
    <property type="term" value="F:histidinol dehydrogenase activity"/>
    <property type="evidence" value="ECO:0007669"/>
    <property type="project" value="UniProtKB-UniRule"/>
</dbReference>
<dbReference type="GO" id="GO:0051287">
    <property type="term" value="F:NAD binding"/>
    <property type="evidence" value="ECO:0007669"/>
    <property type="project" value="InterPro"/>
</dbReference>
<dbReference type="GO" id="GO:0008270">
    <property type="term" value="F:zinc ion binding"/>
    <property type="evidence" value="ECO:0007669"/>
    <property type="project" value="UniProtKB-UniRule"/>
</dbReference>
<dbReference type="GO" id="GO:0000105">
    <property type="term" value="P:L-histidine biosynthetic process"/>
    <property type="evidence" value="ECO:0007669"/>
    <property type="project" value="UniProtKB-UniRule"/>
</dbReference>
<dbReference type="CDD" id="cd06572">
    <property type="entry name" value="Histidinol_dh"/>
    <property type="match status" value="1"/>
</dbReference>
<dbReference type="FunFam" id="1.20.5.1300:FF:000001">
    <property type="entry name" value="Histidine biosynthesis trifunctional protein"/>
    <property type="match status" value="1"/>
</dbReference>
<dbReference type="FunFam" id="3.40.50.1980:FF:000001">
    <property type="entry name" value="Histidinol dehydrogenase"/>
    <property type="match status" value="1"/>
</dbReference>
<dbReference type="Gene3D" id="1.20.5.1300">
    <property type="match status" value="1"/>
</dbReference>
<dbReference type="Gene3D" id="3.40.50.1980">
    <property type="entry name" value="Nitrogenase molybdenum iron protein domain"/>
    <property type="match status" value="2"/>
</dbReference>
<dbReference type="HAMAP" id="MF_01024">
    <property type="entry name" value="HisD"/>
    <property type="match status" value="1"/>
</dbReference>
<dbReference type="InterPro" id="IPR016161">
    <property type="entry name" value="Ald_DH/histidinol_DH"/>
</dbReference>
<dbReference type="InterPro" id="IPR001692">
    <property type="entry name" value="Histidinol_DH_CS"/>
</dbReference>
<dbReference type="InterPro" id="IPR022695">
    <property type="entry name" value="Histidinol_DH_monofunct"/>
</dbReference>
<dbReference type="InterPro" id="IPR012131">
    <property type="entry name" value="Hstdl_DH"/>
</dbReference>
<dbReference type="NCBIfam" id="TIGR00069">
    <property type="entry name" value="hisD"/>
    <property type="match status" value="1"/>
</dbReference>
<dbReference type="PANTHER" id="PTHR21256:SF2">
    <property type="entry name" value="HISTIDINE BIOSYNTHESIS TRIFUNCTIONAL PROTEIN"/>
    <property type="match status" value="1"/>
</dbReference>
<dbReference type="PANTHER" id="PTHR21256">
    <property type="entry name" value="HISTIDINOL DEHYDROGENASE HDH"/>
    <property type="match status" value="1"/>
</dbReference>
<dbReference type="Pfam" id="PF00815">
    <property type="entry name" value="Histidinol_dh"/>
    <property type="match status" value="1"/>
</dbReference>
<dbReference type="PIRSF" id="PIRSF000099">
    <property type="entry name" value="Histidinol_dh"/>
    <property type="match status" value="1"/>
</dbReference>
<dbReference type="PRINTS" id="PR00083">
    <property type="entry name" value="HOLDHDRGNASE"/>
</dbReference>
<dbReference type="SUPFAM" id="SSF53720">
    <property type="entry name" value="ALDH-like"/>
    <property type="match status" value="1"/>
</dbReference>
<dbReference type="PROSITE" id="PS00611">
    <property type="entry name" value="HISOL_DEHYDROGENASE"/>
    <property type="match status" value="1"/>
</dbReference>
<organism>
    <name type="scientific">Escherichia coli O6:H1 (strain CFT073 / ATCC 700928 / UPEC)</name>
    <dbReference type="NCBI Taxonomy" id="199310"/>
    <lineage>
        <taxon>Bacteria</taxon>
        <taxon>Pseudomonadati</taxon>
        <taxon>Pseudomonadota</taxon>
        <taxon>Gammaproteobacteria</taxon>
        <taxon>Enterobacterales</taxon>
        <taxon>Enterobacteriaceae</taxon>
        <taxon>Escherichia</taxon>
    </lineage>
</organism>
<comment type="function">
    <text evidence="2">Catalyzes the sequential NAD-dependent oxidations of L-histidinol to L-histidinaldehyde and then to L-histidine.</text>
</comment>
<comment type="catalytic activity">
    <reaction evidence="2">
        <text>L-histidinol + 2 NAD(+) + H2O = L-histidine + 2 NADH + 3 H(+)</text>
        <dbReference type="Rhea" id="RHEA:20641"/>
        <dbReference type="ChEBI" id="CHEBI:15377"/>
        <dbReference type="ChEBI" id="CHEBI:15378"/>
        <dbReference type="ChEBI" id="CHEBI:57540"/>
        <dbReference type="ChEBI" id="CHEBI:57595"/>
        <dbReference type="ChEBI" id="CHEBI:57699"/>
        <dbReference type="ChEBI" id="CHEBI:57945"/>
        <dbReference type="EC" id="1.1.1.23"/>
    </reaction>
</comment>
<comment type="cofactor">
    <cofactor evidence="2">
        <name>Zn(2+)</name>
        <dbReference type="ChEBI" id="CHEBI:29105"/>
    </cofactor>
    <text evidence="2">Binds 1 zinc ion per subunit.</text>
</comment>
<comment type="pathway">
    <text evidence="2">Amino-acid biosynthesis; L-histidine biosynthesis; L-histidine from 5-phospho-alpha-D-ribose 1-diphosphate: step 9/9.</text>
</comment>
<comment type="subunit">
    <text evidence="2">Homodimer.</text>
</comment>
<comment type="similarity">
    <text evidence="2">Belongs to the histidinol dehydrogenase family.</text>
</comment>
<comment type="sequence caution" evidence="3">
    <conflict type="erroneous initiation">
        <sequence resource="EMBL-CDS" id="AAN81002"/>
    </conflict>
</comment>
<name>HISX_ECOL6</name>